<proteinExistence type="inferred from homology"/>
<sequence length="396" mass="42723">MANDYLFTSESVSEGHPDKVADQISDAILDAILAQDKYSRVAAETLCNTGLVVLAGEITTTANVDYIQVARNTIKRIGYDNTDYGIDYRGCAVLVAYDKQSPDIAQGVDRAHDNNLDQGAGDQGLMFGYACEETPELMPLPIHLSHRLVERQANLRRDGRLPWLRPDAKSQVTVRYVDGKPHAIDTVVLSTQHSPDIDLGTLREAVIEEVIKPTLPAELIKGDIKFLVNPTGRFVIGGPQGDCGLTGRKIIVDTYGGAAPHGGGAFSGKDPSKVDRSAAYAGRYVAKNIVAAGLASRCLIQVSYAIGVAQPTSVMVNTFGTGRVSDATITRLVQEHFDLRPKGIIQMLDLLRPIYEKSAAYGHFGREEPEFTWESTDKALALAEAAGTEPVAALAE</sequence>
<keyword id="KW-0067">ATP-binding</keyword>
<keyword id="KW-0963">Cytoplasm</keyword>
<keyword id="KW-0460">Magnesium</keyword>
<keyword id="KW-0479">Metal-binding</keyword>
<keyword id="KW-0547">Nucleotide-binding</keyword>
<keyword id="KW-0554">One-carbon metabolism</keyword>
<keyword id="KW-0630">Potassium</keyword>
<keyword id="KW-0808">Transferase</keyword>
<organism>
    <name type="scientific">Paraburkholderia phytofirmans (strain DSM 17436 / LMG 22146 / PsJN)</name>
    <name type="common">Burkholderia phytofirmans</name>
    <dbReference type="NCBI Taxonomy" id="398527"/>
    <lineage>
        <taxon>Bacteria</taxon>
        <taxon>Pseudomonadati</taxon>
        <taxon>Pseudomonadota</taxon>
        <taxon>Betaproteobacteria</taxon>
        <taxon>Burkholderiales</taxon>
        <taxon>Burkholderiaceae</taxon>
        <taxon>Paraburkholderia</taxon>
    </lineage>
</organism>
<gene>
    <name evidence="1" type="primary">metK</name>
    <name type="ordered locus">Bphyt_0351</name>
</gene>
<name>METK_PARPJ</name>
<evidence type="ECO:0000255" key="1">
    <source>
        <dbReference type="HAMAP-Rule" id="MF_00086"/>
    </source>
</evidence>
<comment type="function">
    <text evidence="1">Catalyzes the formation of S-adenosylmethionine (AdoMet) from methionine and ATP. The overall synthetic reaction is composed of two sequential steps, AdoMet formation and the subsequent tripolyphosphate hydrolysis which occurs prior to release of AdoMet from the enzyme.</text>
</comment>
<comment type="catalytic activity">
    <reaction evidence="1">
        <text>L-methionine + ATP + H2O = S-adenosyl-L-methionine + phosphate + diphosphate</text>
        <dbReference type="Rhea" id="RHEA:21080"/>
        <dbReference type="ChEBI" id="CHEBI:15377"/>
        <dbReference type="ChEBI" id="CHEBI:30616"/>
        <dbReference type="ChEBI" id="CHEBI:33019"/>
        <dbReference type="ChEBI" id="CHEBI:43474"/>
        <dbReference type="ChEBI" id="CHEBI:57844"/>
        <dbReference type="ChEBI" id="CHEBI:59789"/>
        <dbReference type="EC" id="2.5.1.6"/>
    </reaction>
</comment>
<comment type="cofactor">
    <cofactor evidence="1">
        <name>Mg(2+)</name>
        <dbReference type="ChEBI" id="CHEBI:18420"/>
    </cofactor>
    <text evidence="1">Binds 2 divalent ions per subunit.</text>
</comment>
<comment type="cofactor">
    <cofactor evidence="1">
        <name>K(+)</name>
        <dbReference type="ChEBI" id="CHEBI:29103"/>
    </cofactor>
    <text evidence="1">Binds 1 potassium ion per subunit.</text>
</comment>
<comment type="pathway">
    <text evidence="1">Amino-acid biosynthesis; S-adenosyl-L-methionine biosynthesis; S-adenosyl-L-methionine from L-methionine: step 1/1.</text>
</comment>
<comment type="subunit">
    <text evidence="1">Homotetramer; dimer of dimers.</text>
</comment>
<comment type="subcellular location">
    <subcellularLocation>
        <location evidence="1">Cytoplasm</location>
    </subcellularLocation>
</comment>
<comment type="similarity">
    <text evidence="1">Belongs to the AdoMet synthase family.</text>
</comment>
<dbReference type="EC" id="2.5.1.6" evidence="1"/>
<dbReference type="EMBL" id="CP001052">
    <property type="protein sequence ID" value="ACD14776.1"/>
    <property type="molecule type" value="Genomic_DNA"/>
</dbReference>
<dbReference type="RefSeq" id="WP_012431419.1">
    <property type="nucleotide sequence ID" value="NC_010681.1"/>
</dbReference>
<dbReference type="SMR" id="B2T1P7"/>
<dbReference type="STRING" id="398527.Bphyt_0351"/>
<dbReference type="KEGG" id="bpy:Bphyt_0351"/>
<dbReference type="eggNOG" id="COG0192">
    <property type="taxonomic scope" value="Bacteria"/>
</dbReference>
<dbReference type="HOGENOM" id="CLU_041802_1_1_4"/>
<dbReference type="OrthoDB" id="9801686at2"/>
<dbReference type="UniPathway" id="UPA00315">
    <property type="reaction ID" value="UER00080"/>
</dbReference>
<dbReference type="Proteomes" id="UP000001739">
    <property type="component" value="Chromosome 1"/>
</dbReference>
<dbReference type="GO" id="GO:0005737">
    <property type="term" value="C:cytoplasm"/>
    <property type="evidence" value="ECO:0007669"/>
    <property type="project" value="UniProtKB-SubCell"/>
</dbReference>
<dbReference type="GO" id="GO:0005524">
    <property type="term" value="F:ATP binding"/>
    <property type="evidence" value="ECO:0007669"/>
    <property type="project" value="UniProtKB-UniRule"/>
</dbReference>
<dbReference type="GO" id="GO:0000287">
    <property type="term" value="F:magnesium ion binding"/>
    <property type="evidence" value="ECO:0007669"/>
    <property type="project" value="UniProtKB-UniRule"/>
</dbReference>
<dbReference type="GO" id="GO:0004478">
    <property type="term" value="F:methionine adenosyltransferase activity"/>
    <property type="evidence" value="ECO:0007669"/>
    <property type="project" value="UniProtKB-UniRule"/>
</dbReference>
<dbReference type="GO" id="GO:0006730">
    <property type="term" value="P:one-carbon metabolic process"/>
    <property type="evidence" value="ECO:0007669"/>
    <property type="project" value="UniProtKB-KW"/>
</dbReference>
<dbReference type="GO" id="GO:0006556">
    <property type="term" value="P:S-adenosylmethionine biosynthetic process"/>
    <property type="evidence" value="ECO:0007669"/>
    <property type="project" value="UniProtKB-UniRule"/>
</dbReference>
<dbReference type="CDD" id="cd18079">
    <property type="entry name" value="S-AdoMet_synt"/>
    <property type="match status" value="1"/>
</dbReference>
<dbReference type="FunFam" id="3.30.300.10:FF:000003">
    <property type="entry name" value="S-adenosylmethionine synthase"/>
    <property type="match status" value="1"/>
</dbReference>
<dbReference type="FunFam" id="3.30.300.10:FF:000004">
    <property type="entry name" value="S-adenosylmethionine synthase"/>
    <property type="match status" value="1"/>
</dbReference>
<dbReference type="Gene3D" id="3.30.300.10">
    <property type="match status" value="3"/>
</dbReference>
<dbReference type="HAMAP" id="MF_00086">
    <property type="entry name" value="S_AdoMet_synth1"/>
    <property type="match status" value="1"/>
</dbReference>
<dbReference type="InterPro" id="IPR022631">
    <property type="entry name" value="ADOMET_SYNTHASE_CS"/>
</dbReference>
<dbReference type="InterPro" id="IPR022630">
    <property type="entry name" value="S-AdoMet_synt_C"/>
</dbReference>
<dbReference type="InterPro" id="IPR022629">
    <property type="entry name" value="S-AdoMet_synt_central"/>
</dbReference>
<dbReference type="InterPro" id="IPR022628">
    <property type="entry name" value="S-AdoMet_synt_N"/>
</dbReference>
<dbReference type="InterPro" id="IPR002133">
    <property type="entry name" value="S-AdoMet_synthetase"/>
</dbReference>
<dbReference type="InterPro" id="IPR022636">
    <property type="entry name" value="S-AdoMet_synthetase_sfam"/>
</dbReference>
<dbReference type="NCBIfam" id="TIGR01034">
    <property type="entry name" value="metK"/>
    <property type="match status" value="1"/>
</dbReference>
<dbReference type="PANTHER" id="PTHR11964">
    <property type="entry name" value="S-ADENOSYLMETHIONINE SYNTHETASE"/>
    <property type="match status" value="1"/>
</dbReference>
<dbReference type="Pfam" id="PF02773">
    <property type="entry name" value="S-AdoMet_synt_C"/>
    <property type="match status" value="1"/>
</dbReference>
<dbReference type="Pfam" id="PF02772">
    <property type="entry name" value="S-AdoMet_synt_M"/>
    <property type="match status" value="1"/>
</dbReference>
<dbReference type="Pfam" id="PF00438">
    <property type="entry name" value="S-AdoMet_synt_N"/>
    <property type="match status" value="1"/>
</dbReference>
<dbReference type="PIRSF" id="PIRSF000497">
    <property type="entry name" value="MAT"/>
    <property type="match status" value="1"/>
</dbReference>
<dbReference type="SUPFAM" id="SSF55973">
    <property type="entry name" value="S-adenosylmethionine synthetase"/>
    <property type="match status" value="3"/>
</dbReference>
<dbReference type="PROSITE" id="PS00376">
    <property type="entry name" value="ADOMET_SYNTHASE_1"/>
    <property type="match status" value="1"/>
</dbReference>
<dbReference type="PROSITE" id="PS00377">
    <property type="entry name" value="ADOMET_SYNTHASE_2"/>
    <property type="match status" value="1"/>
</dbReference>
<feature type="chain" id="PRO_1000093032" description="S-adenosylmethionine synthase">
    <location>
        <begin position="1"/>
        <end position="396"/>
    </location>
</feature>
<feature type="region of interest" description="Flexible loop" evidence="1">
    <location>
        <begin position="100"/>
        <end position="110"/>
    </location>
</feature>
<feature type="binding site" description="in other chain" evidence="1">
    <location>
        <position position="16"/>
    </location>
    <ligand>
        <name>ATP</name>
        <dbReference type="ChEBI" id="CHEBI:30616"/>
        <note>ligand shared between two neighboring subunits</note>
    </ligand>
</feature>
<feature type="binding site" evidence="1">
    <location>
        <position position="18"/>
    </location>
    <ligand>
        <name>Mg(2+)</name>
        <dbReference type="ChEBI" id="CHEBI:18420"/>
    </ligand>
</feature>
<feature type="binding site" evidence="1">
    <location>
        <position position="44"/>
    </location>
    <ligand>
        <name>K(+)</name>
        <dbReference type="ChEBI" id="CHEBI:29103"/>
    </ligand>
</feature>
<feature type="binding site" description="in other chain" evidence="1">
    <location>
        <position position="57"/>
    </location>
    <ligand>
        <name>L-methionine</name>
        <dbReference type="ChEBI" id="CHEBI:57844"/>
        <note>ligand shared between two neighboring subunits</note>
    </ligand>
</feature>
<feature type="binding site" description="in other chain" evidence="1">
    <location>
        <position position="100"/>
    </location>
    <ligand>
        <name>L-methionine</name>
        <dbReference type="ChEBI" id="CHEBI:57844"/>
        <note>ligand shared between two neighboring subunits</note>
    </ligand>
</feature>
<feature type="binding site" description="in other chain" evidence="1">
    <location>
        <begin position="167"/>
        <end position="169"/>
    </location>
    <ligand>
        <name>ATP</name>
        <dbReference type="ChEBI" id="CHEBI:30616"/>
        <note>ligand shared between two neighboring subunits</note>
    </ligand>
</feature>
<feature type="binding site" description="in other chain" evidence="1">
    <location>
        <begin position="233"/>
        <end position="234"/>
    </location>
    <ligand>
        <name>ATP</name>
        <dbReference type="ChEBI" id="CHEBI:30616"/>
        <note>ligand shared between two neighboring subunits</note>
    </ligand>
</feature>
<feature type="binding site" evidence="1">
    <location>
        <position position="242"/>
    </location>
    <ligand>
        <name>ATP</name>
        <dbReference type="ChEBI" id="CHEBI:30616"/>
        <note>ligand shared between two neighboring subunits</note>
    </ligand>
</feature>
<feature type="binding site" evidence="1">
    <location>
        <position position="242"/>
    </location>
    <ligand>
        <name>L-methionine</name>
        <dbReference type="ChEBI" id="CHEBI:57844"/>
        <note>ligand shared between two neighboring subunits</note>
    </ligand>
</feature>
<feature type="binding site" description="in other chain" evidence="1">
    <location>
        <begin position="248"/>
        <end position="249"/>
    </location>
    <ligand>
        <name>ATP</name>
        <dbReference type="ChEBI" id="CHEBI:30616"/>
        <note>ligand shared between two neighboring subunits</note>
    </ligand>
</feature>
<feature type="binding site" evidence="1">
    <location>
        <position position="265"/>
    </location>
    <ligand>
        <name>ATP</name>
        <dbReference type="ChEBI" id="CHEBI:30616"/>
        <note>ligand shared between two neighboring subunits</note>
    </ligand>
</feature>
<feature type="binding site" evidence="1">
    <location>
        <position position="269"/>
    </location>
    <ligand>
        <name>ATP</name>
        <dbReference type="ChEBI" id="CHEBI:30616"/>
        <note>ligand shared between two neighboring subunits</note>
    </ligand>
</feature>
<feature type="binding site" description="in other chain" evidence="1">
    <location>
        <position position="273"/>
    </location>
    <ligand>
        <name>L-methionine</name>
        <dbReference type="ChEBI" id="CHEBI:57844"/>
        <note>ligand shared between two neighboring subunits</note>
    </ligand>
</feature>
<protein>
    <recommendedName>
        <fullName evidence="1">S-adenosylmethionine synthase</fullName>
        <shortName evidence="1">AdoMet synthase</shortName>
        <ecNumber evidence="1">2.5.1.6</ecNumber>
    </recommendedName>
    <alternativeName>
        <fullName evidence="1">MAT</fullName>
    </alternativeName>
    <alternativeName>
        <fullName evidence="1">Methionine adenosyltransferase</fullName>
    </alternativeName>
</protein>
<reference key="1">
    <citation type="journal article" date="2011" name="J. Bacteriol.">
        <title>Complete genome sequence of the plant growth-promoting endophyte Burkholderia phytofirmans strain PsJN.</title>
        <authorList>
            <person name="Weilharter A."/>
            <person name="Mitter B."/>
            <person name="Shin M.V."/>
            <person name="Chain P.S."/>
            <person name="Nowak J."/>
            <person name="Sessitsch A."/>
        </authorList>
    </citation>
    <scope>NUCLEOTIDE SEQUENCE [LARGE SCALE GENOMIC DNA]</scope>
    <source>
        <strain>DSM 17436 / LMG 22146 / PsJN</strain>
    </source>
</reference>
<accession>B2T1P7</accession>